<name>RL27_SALEP</name>
<evidence type="ECO:0000255" key="1">
    <source>
        <dbReference type="HAMAP-Rule" id="MF_00539"/>
    </source>
</evidence>
<evidence type="ECO:0000256" key="2">
    <source>
        <dbReference type="SAM" id="MobiDB-lite"/>
    </source>
</evidence>
<evidence type="ECO:0000305" key="3"/>
<comment type="similarity">
    <text evidence="1">Belongs to the bacterial ribosomal protein bL27 family.</text>
</comment>
<accession>B5R0H6</accession>
<feature type="chain" id="PRO_1000128802" description="Large ribosomal subunit protein bL27">
    <location>
        <begin position="1"/>
        <end position="85"/>
    </location>
</feature>
<feature type="region of interest" description="Disordered" evidence="2">
    <location>
        <begin position="1"/>
        <end position="20"/>
    </location>
</feature>
<protein>
    <recommendedName>
        <fullName evidence="1">Large ribosomal subunit protein bL27</fullName>
    </recommendedName>
    <alternativeName>
        <fullName evidence="3">50S ribosomal protein L27</fullName>
    </alternativeName>
</protein>
<gene>
    <name evidence="1" type="primary">rpmA</name>
    <name type="ordered locus">SEN3136</name>
</gene>
<reference key="1">
    <citation type="journal article" date="2008" name="Genome Res.">
        <title>Comparative genome analysis of Salmonella enteritidis PT4 and Salmonella gallinarum 287/91 provides insights into evolutionary and host adaptation pathways.</title>
        <authorList>
            <person name="Thomson N.R."/>
            <person name="Clayton D.J."/>
            <person name="Windhorst D."/>
            <person name="Vernikos G."/>
            <person name="Davidson S."/>
            <person name="Churcher C."/>
            <person name="Quail M.A."/>
            <person name="Stevens M."/>
            <person name="Jones M.A."/>
            <person name="Watson M."/>
            <person name="Barron A."/>
            <person name="Layton A."/>
            <person name="Pickard D."/>
            <person name="Kingsley R.A."/>
            <person name="Bignell A."/>
            <person name="Clark L."/>
            <person name="Harris B."/>
            <person name="Ormond D."/>
            <person name="Abdellah Z."/>
            <person name="Brooks K."/>
            <person name="Cherevach I."/>
            <person name="Chillingworth T."/>
            <person name="Woodward J."/>
            <person name="Norberczak H."/>
            <person name="Lord A."/>
            <person name="Arrowsmith C."/>
            <person name="Jagels K."/>
            <person name="Moule S."/>
            <person name="Mungall K."/>
            <person name="Saunders M."/>
            <person name="Whitehead S."/>
            <person name="Chabalgoity J.A."/>
            <person name="Maskell D."/>
            <person name="Humphreys T."/>
            <person name="Roberts M."/>
            <person name="Barrow P.A."/>
            <person name="Dougan G."/>
            <person name="Parkhill J."/>
        </authorList>
    </citation>
    <scope>NUCLEOTIDE SEQUENCE [LARGE SCALE GENOMIC DNA]</scope>
    <source>
        <strain>P125109</strain>
    </source>
</reference>
<keyword id="KW-0687">Ribonucleoprotein</keyword>
<keyword id="KW-0689">Ribosomal protein</keyword>
<dbReference type="EMBL" id="AM933172">
    <property type="protein sequence ID" value="CAR34712.1"/>
    <property type="molecule type" value="Genomic_DNA"/>
</dbReference>
<dbReference type="RefSeq" id="WP_000940593.1">
    <property type="nucleotide sequence ID" value="NC_011294.1"/>
</dbReference>
<dbReference type="SMR" id="B5R0H6"/>
<dbReference type="GeneID" id="66757642"/>
<dbReference type="KEGG" id="set:SEN3136"/>
<dbReference type="HOGENOM" id="CLU_095424_4_1_6"/>
<dbReference type="Proteomes" id="UP000000613">
    <property type="component" value="Chromosome"/>
</dbReference>
<dbReference type="GO" id="GO:0022625">
    <property type="term" value="C:cytosolic large ribosomal subunit"/>
    <property type="evidence" value="ECO:0007669"/>
    <property type="project" value="TreeGrafter"/>
</dbReference>
<dbReference type="GO" id="GO:0003735">
    <property type="term" value="F:structural constituent of ribosome"/>
    <property type="evidence" value="ECO:0007669"/>
    <property type="project" value="InterPro"/>
</dbReference>
<dbReference type="GO" id="GO:0006412">
    <property type="term" value="P:translation"/>
    <property type="evidence" value="ECO:0007669"/>
    <property type="project" value="UniProtKB-UniRule"/>
</dbReference>
<dbReference type="FunFam" id="2.40.50.100:FF:000001">
    <property type="entry name" value="50S ribosomal protein L27"/>
    <property type="match status" value="1"/>
</dbReference>
<dbReference type="Gene3D" id="2.40.50.100">
    <property type="match status" value="1"/>
</dbReference>
<dbReference type="HAMAP" id="MF_00539">
    <property type="entry name" value="Ribosomal_bL27"/>
    <property type="match status" value="1"/>
</dbReference>
<dbReference type="InterPro" id="IPR001684">
    <property type="entry name" value="Ribosomal_bL27"/>
</dbReference>
<dbReference type="InterPro" id="IPR018261">
    <property type="entry name" value="Ribosomal_bL27_CS"/>
</dbReference>
<dbReference type="NCBIfam" id="TIGR00062">
    <property type="entry name" value="L27"/>
    <property type="match status" value="1"/>
</dbReference>
<dbReference type="PANTHER" id="PTHR15893:SF0">
    <property type="entry name" value="LARGE RIBOSOMAL SUBUNIT PROTEIN BL27M"/>
    <property type="match status" value="1"/>
</dbReference>
<dbReference type="PANTHER" id="PTHR15893">
    <property type="entry name" value="RIBOSOMAL PROTEIN L27"/>
    <property type="match status" value="1"/>
</dbReference>
<dbReference type="Pfam" id="PF01016">
    <property type="entry name" value="Ribosomal_L27"/>
    <property type="match status" value="1"/>
</dbReference>
<dbReference type="PRINTS" id="PR00063">
    <property type="entry name" value="RIBOSOMALL27"/>
</dbReference>
<dbReference type="SUPFAM" id="SSF110324">
    <property type="entry name" value="Ribosomal L27 protein-like"/>
    <property type="match status" value="1"/>
</dbReference>
<dbReference type="PROSITE" id="PS00831">
    <property type="entry name" value="RIBOSOMAL_L27"/>
    <property type="match status" value="1"/>
</dbReference>
<proteinExistence type="inferred from homology"/>
<sequence length="85" mass="9125">MAHKKAGGSTRNGRDSEAKRLGVKRFGGEAVLAGSIIVRQRGTKFHAGTNVGCGRDHTLFAKADGKVKFEVKGPKNRKYISIVAE</sequence>
<organism>
    <name type="scientific">Salmonella enteritidis PT4 (strain P125109)</name>
    <dbReference type="NCBI Taxonomy" id="550537"/>
    <lineage>
        <taxon>Bacteria</taxon>
        <taxon>Pseudomonadati</taxon>
        <taxon>Pseudomonadota</taxon>
        <taxon>Gammaproteobacteria</taxon>
        <taxon>Enterobacterales</taxon>
        <taxon>Enterobacteriaceae</taxon>
        <taxon>Salmonella</taxon>
    </lineage>
</organism>